<organism>
    <name type="scientific">Borrelia turicatae (strain 91E135)</name>
    <dbReference type="NCBI Taxonomy" id="314724"/>
    <lineage>
        <taxon>Bacteria</taxon>
        <taxon>Pseudomonadati</taxon>
        <taxon>Spirochaetota</taxon>
        <taxon>Spirochaetia</taxon>
        <taxon>Spirochaetales</taxon>
        <taxon>Borreliaceae</taxon>
        <taxon>Borrelia</taxon>
    </lineage>
</organism>
<reference key="1">
    <citation type="submission" date="2004-12" db="EMBL/GenBank/DDBJ databases">
        <title>The genome sequence of Borrelia hermsii and Borrelia turicatae: comparative analysis of two agents of endemic N. America relapsing fever.</title>
        <authorList>
            <person name="Porcella S.F."/>
            <person name="Raffel S.J."/>
            <person name="Schrumpf M.E."/>
            <person name="Montgomery B."/>
            <person name="Smith T."/>
            <person name="Schwan T.G."/>
        </authorList>
    </citation>
    <scope>NUCLEOTIDE SEQUENCE [LARGE SCALE GENOMIC DNA]</scope>
    <source>
        <strain>91E135</strain>
    </source>
</reference>
<gene>
    <name evidence="1" type="primary">pgk</name>
    <name type="ordered locus">BT0056</name>
</gene>
<feature type="chain" id="PRO_1000192809" description="Phosphoglycerate kinase">
    <location>
        <begin position="1"/>
        <end position="392"/>
    </location>
</feature>
<feature type="binding site" evidence="1">
    <location>
        <begin position="21"/>
        <end position="23"/>
    </location>
    <ligand>
        <name>substrate</name>
    </ligand>
</feature>
<feature type="binding site" evidence="1">
    <location>
        <position position="36"/>
    </location>
    <ligand>
        <name>substrate</name>
    </ligand>
</feature>
<feature type="binding site" evidence="1">
    <location>
        <begin position="59"/>
        <end position="62"/>
    </location>
    <ligand>
        <name>substrate</name>
    </ligand>
</feature>
<feature type="binding site" evidence="1">
    <location>
        <position position="118"/>
    </location>
    <ligand>
        <name>substrate</name>
    </ligand>
</feature>
<feature type="binding site" evidence="1">
    <location>
        <position position="151"/>
    </location>
    <ligand>
        <name>substrate</name>
    </ligand>
</feature>
<feature type="binding site" evidence="1">
    <location>
        <position position="201"/>
    </location>
    <ligand>
        <name>ATP</name>
        <dbReference type="ChEBI" id="CHEBI:30616"/>
    </ligand>
</feature>
<feature type="binding site" evidence="1">
    <location>
        <position position="292"/>
    </location>
    <ligand>
        <name>ATP</name>
        <dbReference type="ChEBI" id="CHEBI:30616"/>
    </ligand>
</feature>
<feature type="binding site" evidence="1">
    <location>
        <position position="323"/>
    </location>
    <ligand>
        <name>ATP</name>
        <dbReference type="ChEBI" id="CHEBI:30616"/>
    </ligand>
</feature>
<feature type="binding site" evidence="1">
    <location>
        <begin position="349"/>
        <end position="352"/>
    </location>
    <ligand>
        <name>ATP</name>
        <dbReference type="ChEBI" id="CHEBI:30616"/>
    </ligand>
</feature>
<keyword id="KW-0067">ATP-binding</keyword>
<keyword id="KW-0963">Cytoplasm</keyword>
<keyword id="KW-0324">Glycolysis</keyword>
<keyword id="KW-0418">Kinase</keyword>
<keyword id="KW-0547">Nucleotide-binding</keyword>
<keyword id="KW-1185">Reference proteome</keyword>
<keyword id="KW-0808">Transferase</keyword>
<accession>A1QYK6</accession>
<sequence length="392" mass="42493">MSIKTIKDCDFAGKRALVRCDFNVPLKEGNITDDTRIRAALPTIEYLKSQGARVILMSHLGRPKGEKNLKYSLMPVAKRLSELLGQDVKMLPDCIGDEVATTVSCMKNGDIVLLENLRFYKEEEENCDAFVRKLSQNGDIFVNDAFGTAHRAHASTAGLAAYLPAVGGFLMEKEDEFLGKILRNPESPFVAIIGGSKVSSKIAVLESLLPKSNVMVIGGGMAYTFLKVEGYSIGQSLLENEYIDVASSFLKKAKELDVKVILPLDHVVASEFREDSIPEYVDSVDIPNDKVGMDIGEKTLRKIEEVLVSAKTVIWNGPLGVFEFNSFSKGTAKVAEYVASCSGITVVGGGDSVAAVNKFNLSEKITHVSTGGGASLEYLEGKVLPGIKVLEK</sequence>
<name>PGK_BORT9</name>
<proteinExistence type="inferred from homology"/>
<evidence type="ECO:0000255" key="1">
    <source>
        <dbReference type="HAMAP-Rule" id="MF_00145"/>
    </source>
</evidence>
<dbReference type="EC" id="2.7.2.3" evidence="1"/>
<dbReference type="EMBL" id="CP000049">
    <property type="protein sequence ID" value="AAX17398.1"/>
    <property type="molecule type" value="Genomic_DNA"/>
</dbReference>
<dbReference type="RefSeq" id="WP_011772017.1">
    <property type="nucleotide sequence ID" value="NZ_CP073176.1"/>
</dbReference>
<dbReference type="SMR" id="A1QYK6"/>
<dbReference type="KEGG" id="btu:BT0056"/>
<dbReference type="eggNOG" id="COG0126">
    <property type="taxonomic scope" value="Bacteria"/>
</dbReference>
<dbReference type="HOGENOM" id="CLU_025427_0_2_12"/>
<dbReference type="UniPathway" id="UPA00109">
    <property type="reaction ID" value="UER00185"/>
</dbReference>
<dbReference type="Proteomes" id="UP000001205">
    <property type="component" value="Chromosome"/>
</dbReference>
<dbReference type="GO" id="GO:0005829">
    <property type="term" value="C:cytosol"/>
    <property type="evidence" value="ECO:0007669"/>
    <property type="project" value="TreeGrafter"/>
</dbReference>
<dbReference type="GO" id="GO:0043531">
    <property type="term" value="F:ADP binding"/>
    <property type="evidence" value="ECO:0007669"/>
    <property type="project" value="TreeGrafter"/>
</dbReference>
<dbReference type="GO" id="GO:0005524">
    <property type="term" value="F:ATP binding"/>
    <property type="evidence" value="ECO:0007669"/>
    <property type="project" value="UniProtKB-KW"/>
</dbReference>
<dbReference type="GO" id="GO:0004618">
    <property type="term" value="F:phosphoglycerate kinase activity"/>
    <property type="evidence" value="ECO:0007669"/>
    <property type="project" value="UniProtKB-UniRule"/>
</dbReference>
<dbReference type="GO" id="GO:0006094">
    <property type="term" value="P:gluconeogenesis"/>
    <property type="evidence" value="ECO:0007669"/>
    <property type="project" value="TreeGrafter"/>
</dbReference>
<dbReference type="GO" id="GO:0006096">
    <property type="term" value="P:glycolytic process"/>
    <property type="evidence" value="ECO:0007669"/>
    <property type="project" value="UniProtKB-UniRule"/>
</dbReference>
<dbReference type="CDD" id="cd00318">
    <property type="entry name" value="Phosphoglycerate_kinase"/>
    <property type="match status" value="1"/>
</dbReference>
<dbReference type="FunFam" id="3.40.50.1260:FF:000003">
    <property type="entry name" value="Phosphoglycerate kinase"/>
    <property type="match status" value="1"/>
</dbReference>
<dbReference type="FunFam" id="3.40.50.1260:FF:000006">
    <property type="entry name" value="Phosphoglycerate kinase"/>
    <property type="match status" value="1"/>
</dbReference>
<dbReference type="Gene3D" id="3.40.50.1260">
    <property type="entry name" value="Phosphoglycerate kinase, N-terminal domain"/>
    <property type="match status" value="2"/>
</dbReference>
<dbReference type="HAMAP" id="MF_00145">
    <property type="entry name" value="Phosphoglyc_kinase"/>
    <property type="match status" value="1"/>
</dbReference>
<dbReference type="InterPro" id="IPR001576">
    <property type="entry name" value="Phosphoglycerate_kinase"/>
</dbReference>
<dbReference type="InterPro" id="IPR015824">
    <property type="entry name" value="Phosphoglycerate_kinase_N"/>
</dbReference>
<dbReference type="InterPro" id="IPR036043">
    <property type="entry name" value="Phosphoglycerate_kinase_sf"/>
</dbReference>
<dbReference type="PANTHER" id="PTHR11406">
    <property type="entry name" value="PHOSPHOGLYCERATE KINASE"/>
    <property type="match status" value="1"/>
</dbReference>
<dbReference type="PANTHER" id="PTHR11406:SF23">
    <property type="entry name" value="PHOSPHOGLYCERATE KINASE 1, CHLOROPLASTIC-RELATED"/>
    <property type="match status" value="1"/>
</dbReference>
<dbReference type="Pfam" id="PF00162">
    <property type="entry name" value="PGK"/>
    <property type="match status" value="1"/>
</dbReference>
<dbReference type="PIRSF" id="PIRSF000724">
    <property type="entry name" value="Pgk"/>
    <property type="match status" value="1"/>
</dbReference>
<dbReference type="PRINTS" id="PR00477">
    <property type="entry name" value="PHGLYCKINASE"/>
</dbReference>
<dbReference type="SUPFAM" id="SSF53748">
    <property type="entry name" value="Phosphoglycerate kinase"/>
    <property type="match status" value="1"/>
</dbReference>
<protein>
    <recommendedName>
        <fullName evidence="1">Phosphoglycerate kinase</fullName>
        <ecNumber evidence="1">2.7.2.3</ecNumber>
    </recommendedName>
</protein>
<comment type="catalytic activity">
    <reaction evidence="1">
        <text>(2R)-3-phosphoglycerate + ATP = (2R)-3-phospho-glyceroyl phosphate + ADP</text>
        <dbReference type="Rhea" id="RHEA:14801"/>
        <dbReference type="ChEBI" id="CHEBI:30616"/>
        <dbReference type="ChEBI" id="CHEBI:57604"/>
        <dbReference type="ChEBI" id="CHEBI:58272"/>
        <dbReference type="ChEBI" id="CHEBI:456216"/>
        <dbReference type="EC" id="2.7.2.3"/>
    </reaction>
</comment>
<comment type="pathway">
    <text evidence="1">Carbohydrate degradation; glycolysis; pyruvate from D-glyceraldehyde 3-phosphate: step 2/5.</text>
</comment>
<comment type="subunit">
    <text evidence="1">Monomer.</text>
</comment>
<comment type="subcellular location">
    <subcellularLocation>
        <location evidence="1">Cytoplasm</location>
    </subcellularLocation>
</comment>
<comment type="similarity">
    <text evidence="1">Belongs to the phosphoglycerate kinase family.</text>
</comment>